<keyword id="KW-0963">Cytoplasm</keyword>
<keyword id="KW-0342">GTP-binding</keyword>
<keyword id="KW-0378">Hydrolase</keyword>
<keyword id="KW-0460">Magnesium</keyword>
<keyword id="KW-0479">Metal-binding</keyword>
<keyword id="KW-0547">Nucleotide-binding</keyword>
<feature type="chain" id="PRO_0000386368" description="GTPase Obg">
    <location>
        <begin position="1"/>
        <end position="352"/>
    </location>
</feature>
<feature type="domain" description="Obg" evidence="2">
    <location>
        <begin position="1"/>
        <end position="159"/>
    </location>
</feature>
<feature type="domain" description="OBG-type G" evidence="1">
    <location>
        <begin position="160"/>
        <end position="330"/>
    </location>
</feature>
<feature type="binding site" evidence="1">
    <location>
        <begin position="166"/>
        <end position="173"/>
    </location>
    <ligand>
        <name>GTP</name>
        <dbReference type="ChEBI" id="CHEBI:37565"/>
    </ligand>
</feature>
<feature type="binding site" evidence="1">
    <location>
        <position position="173"/>
    </location>
    <ligand>
        <name>Mg(2+)</name>
        <dbReference type="ChEBI" id="CHEBI:18420"/>
    </ligand>
</feature>
<feature type="binding site" evidence="1">
    <location>
        <begin position="191"/>
        <end position="195"/>
    </location>
    <ligand>
        <name>GTP</name>
        <dbReference type="ChEBI" id="CHEBI:37565"/>
    </ligand>
</feature>
<feature type="binding site" evidence="1">
    <location>
        <position position="193"/>
    </location>
    <ligand>
        <name>Mg(2+)</name>
        <dbReference type="ChEBI" id="CHEBI:18420"/>
    </ligand>
</feature>
<feature type="binding site" evidence="1">
    <location>
        <begin position="213"/>
        <end position="216"/>
    </location>
    <ligand>
        <name>GTP</name>
        <dbReference type="ChEBI" id="CHEBI:37565"/>
    </ligand>
</feature>
<feature type="binding site" evidence="1">
    <location>
        <begin position="280"/>
        <end position="283"/>
    </location>
    <ligand>
        <name>GTP</name>
        <dbReference type="ChEBI" id="CHEBI:37565"/>
    </ligand>
</feature>
<feature type="binding site" evidence="1">
    <location>
        <begin position="311"/>
        <end position="313"/>
    </location>
    <ligand>
        <name>GTP</name>
        <dbReference type="ChEBI" id="CHEBI:37565"/>
    </ligand>
</feature>
<gene>
    <name evidence="1" type="primary">obg</name>
    <name type="ordered locus">Tery_4115</name>
</gene>
<reference key="1">
    <citation type="journal article" date="2015" name="Proc. Natl. Acad. Sci. U.S.A.">
        <title>Trichodesmium genome maintains abundant, widespread noncoding DNA in situ, despite oligotrophic lifestyle.</title>
        <authorList>
            <person name="Walworth N."/>
            <person name="Pfreundt U."/>
            <person name="Nelson W.C."/>
            <person name="Mincer T."/>
            <person name="Heidelberg J.F."/>
            <person name="Fu F."/>
            <person name="Waterbury J.B."/>
            <person name="Glavina del Rio T."/>
            <person name="Goodwin L."/>
            <person name="Kyrpides N.C."/>
            <person name="Land M.L."/>
            <person name="Woyke T."/>
            <person name="Hutchins D.A."/>
            <person name="Hess W.R."/>
            <person name="Webb E.A."/>
        </authorList>
    </citation>
    <scope>NUCLEOTIDE SEQUENCE [LARGE SCALE GENOMIC DNA]</scope>
    <source>
        <strain>IMS101</strain>
    </source>
</reference>
<organism>
    <name type="scientific">Trichodesmium erythraeum (strain IMS101)</name>
    <dbReference type="NCBI Taxonomy" id="203124"/>
    <lineage>
        <taxon>Bacteria</taxon>
        <taxon>Bacillati</taxon>
        <taxon>Cyanobacteriota</taxon>
        <taxon>Cyanophyceae</taxon>
        <taxon>Oscillatoriophycideae</taxon>
        <taxon>Oscillatoriales</taxon>
        <taxon>Microcoleaceae</taxon>
        <taxon>Trichodesmium</taxon>
    </lineage>
</organism>
<proteinExistence type="inferred from homology"/>
<name>OBG_TRIEI</name>
<evidence type="ECO:0000255" key="1">
    <source>
        <dbReference type="HAMAP-Rule" id="MF_01454"/>
    </source>
</evidence>
<evidence type="ECO:0000255" key="2">
    <source>
        <dbReference type="PROSITE-ProRule" id="PRU01231"/>
    </source>
</evidence>
<accession>Q10XA1</accession>
<sequence>MQFIDQAEIQVEAGKGGDGMVAFRREKFVPAGGPAGGNGGRGGSVVLVAVANLQTLLDFKFQRVFKAENGKRGGPKNMTGAGGSDRLIEVPPGTMIYDRETEELLGDLVKPGQTCCVAQGGKGGLGNKHFLSNSNRAPEYALPGLDGEVRMLRLELKLLAEVGIIGLPNAGKSTLIAALSAARPKIADYPFTTLVPNLGVVRKPTGDGTVFADIPGLIEGASAGLGLGHEFLRHIERTRLLLHLVDITDVDPVENFETIQNELEVYGRSLEDKRQVLALNKVDAVDVKGAEIQELVNRFREISGGKVFLISAVAGIGLEELMQEIWGLLEMEEEVKSSELTPTPPLVSREES</sequence>
<protein>
    <recommendedName>
        <fullName evidence="1">GTPase Obg</fullName>
        <ecNumber evidence="1">3.6.5.-</ecNumber>
    </recommendedName>
    <alternativeName>
        <fullName evidence="1">GTP-binding protein Obg</fullName>
    </alternativeName>
</protein>
<dbReference type="EC" id="3.6.5.-" evidence="1"/>
<dbReference type="EMBL" id="CP000393">
    <property type="protein sequence ID" value="ABG53123.1"/>
    <property type="molecule type" value="Genomic_DNA"/>
</dbReference>
<dbReference type="RefSeq" id="WP_011613453.1">
    <property type="nucleotide sequence ID" value="NC_008312.1"/>
</dbReference>
<dbReference type="SMR" id="Q10XA1"/>
<dbReference type="STRING" id="203124.Tery_4115"/>
<dbReference type="KEGG" id="ter:Tery_4115"/>
<dbReference type="eggNOG" id="COG0536">
    <property type="taxonomic scope" value="Bacteria"/>
</dbReference>
<dbReference type="HOGENOM" id="CLU_011747_2_0_3"/>
<dbReference type="OrthoDB" id="9807318at2"/>
<dbReference type="GO" id="GO:0005737">
    <property type="term" value="C:cytoplasm"/>
    <property type="evidence" value="ECO:0007669"/>
    <property type="project" value="UniProtKB-SubCell"/>
</dbReference>
<dbReference type="GO" id="GO:0005525">
    <property type="term" value="F:GTP binding"/>
    <property type="evidence" value="ECO:0007669"/>
    <property type="project" value="UniProtKB-UniRule"/>
</dbReference>
<dbReference type="GO" id="GO:0003924">
    <property type="term" value="F:GTPase activity"/>
    <property type="evidence" value="ECO:0007669"/>
    <property type="project" value="UniProtKB-UniRule"/>
</dbReference>
<dbReference type="GO" id="GO:0000287">
    <property type="term" value="F:magnesium ion binding"/>
    <property type="evidence" value="ECO:0007669"/>
    <property type="project" value="InterPro"/>
</dbReference>
<dbReference type="GO" id="GO:0042254">
    <property type="term" value="P:ribosome biogenesis"/>
    <property type="evidence" value="ECO:0007669"/>
    <property type="project" value="UniProtKB-UniRule"/>
</dbReference>
<dbReference type="CDD" id="cd01898">
    <property type="entry name" value="Obg"/>
    <property type="match status" value="1"/>
</dbReference>
<dbReference type="FunFam" id="2.70.210.12:FF:000001">
    <property type="entry name" value="GTPase Obg"/>
    <property type="match status" value="1"/>
</dbReference>
<dbReference type="Gene3D" id="2.70.210.12">
    <property type="entry name" value="GTP1/OBG domain"/>
    <property type="match status" value="1"/>
</dbReference>
<dbReference type="Gene3D" id="3.40.50.300">
    <property type="entry name" value="P-loop containing nucleotide triphosphate hydrolases"/>
    <property type="match status" value="1"/>
</dbReference>
<dbReference type="HAMAP" id="MF_01454">
    <property type="entry name" value="GTPase_Obg"/>
    <property type="match status" value="1"/>
</dbReference>
<dbReference type="InterPro" id="IPR031167">
    <property type="entry name" value="G_OBG"/>
</dbReference>
<dbReference type="InterPro" id="IPR006073">
    <property type="entry name" value="GTP-bd"/>
</dbReference>
<dbReference type="InterPro" id="IPR014100">
    <property type="entry name" value="GTP-bd_Obg/CgtA"/>
</dbReference>
<dbReference type="InterPro" id="IPR006074">
    <property type="entry name" value="GTP1-OBG_CS"/>
</dbReference>
<dbReference type="InterPro" id="IPR006169">
    <property type="entry name" value="GTP1_OBG_dom"/>
</dbReference>
<dbReference type="InterPro" id="IPR036726">
    <property type="entry name" value="GTP1_OBG_dom_sf"/>
</dbReference>
<dbReference type="InterPro" id="IPR045086">
    <property type="entry name" value="OBG_GTPase"/>
</dbReference>
<dbReference type="InterPro" id="IPR027417">
    <property type="entry name" value="P-loop_NTPase"/>
</dbReference>
<dbReference type="NCBIfam" id="TIGR02729">
    <property type="entry name" value="Obg_CgtA"/>
    <property type="match status" value="1"/>
</dbReference>
<dbReference type="NCBIfam" id="NF008955">
    <property type="entry name" value="PRK12297.1"/>
    <property type="match status" value="1"/>
</dbReference>
<dbReference type="NCBIfam" id="NF008956">
    <property type="entry name" value="PRK12299.1"/>
    <property type="match status" value="1"/>
</dbReference>
<dbReference type="PANTHER" id="PTHR11702">
    <property type="entry name" value="DEVELOPMENTALLY REGULATED GTP-BINDING PROTEIN-RELATED"/>
    <property type="match status" value="1"/>
</dbReference>
<dbReference type="PANTHER" id="PTHR11702:SF31">
    <property type="entry name" value="MITOCHONDRIAL RIBOSOME-ASSOCIATED GTPASE 2"/>
    <property type="match status" value="1"/>
</dbReference>
<dbReference type="Pfam" id="PF01018">
    <property type="entry name" value="GTP1_OBG"/>
    <property type="match status" value="1"/>
</dbReference>
<dbReference type="Pfam" id="PF01926">
    <property type="entry name" value="MMR_HSR1"/>
    <property type="match status" value="1"/>
</dbReference>
<dbReference type="PIRSF" id="PIRSF002401">
    <property type="entry name" value="GTP_bd_Obg/CgtA"/>
    <property type="match status" value="1"/>
</dbReference>
<dbReference type="PRINTS" id="PR00326">
    <property type="entry name" value="GTP1OBG"/>
</dbReference>
<dbReference type="SUPFAM" id="SSF82051">
    <property type="entry name" value="Obg GTP-binding protein N-terminal domain"/>
    <property type="match status" value="1"/>
</dbReference>
<dbReference type="SUPFAM" id="SSF52540">
    <property type="entry name" value="P-loop containing nucleoside triphosphate hydrolases"/>
    <property type="match status" value="1"/>
</dbReference>
<dbReference type="PROSITE" id="PS51710">
    <property type="entry name" value="G_OBG"/>
    <property type="match status" value="1"/>
</dbReference>
<dbReference type="PROSITE" id="PS00905">
    <property type="entry name" value="GTP1_OBG"/>
    <property type="match status" value="1"/>
</dbReference>
<dbReference type="PROSITE" id="PS51883">
    <property type="entry name" value="OBG"/>
    <property type="match status" value="1"/>
</dbReference>
<comment type="function">
    <text evidence="1">An essential GTPase which binds GTP, GDP and possibly (p)ppGpp with moderate affinity, with high nucleotide exchange rates and a fairly low GTP hydrolysis rate. Plays a role in control of the cell cycle, stress response, ribosome biogenesis and in those bacteria that undergo differentiation, in morphogenesis control.</text>
</comment>
<comment type="cofactor">
    <cofactor evidence="1">
        <name>Mg(2+)</name>
        <dbReference type="ChEBI" id="CHEBI:18420"/>
    </cofactor>
</comment>
<comment type="subunit">
    <text evidence="1">Monomer.</text>
</comment>
<comment type="subcellular location">
    <subcellularLocation>
        <location evidence="1">Cytoplasm</location>
    </subcellularLocation>
</comment>
<comment type="similarity">
    <text evidence="1">Belongs to the TRAFAC class OBG-HflX-like GTPase superfamily. OBG GTPase family.</text>
</comment>